<feature type="chain" id="PRO_0000177577" description="Translation initiation factor IF-3">
    <location>
        <begin position="1"/>
        <end position="175"/>
    </location>
</feature>
<sequence>MSTIAKDQTQINDKIRAKELRLIGQDGEQIGVKSKREALEMAERVDLDLVVVAPNAKPPVARIMDYGKFKFEQQKKEKEMKKKQKIINVKEIRLSPTIEEHDFQTKLKNGRKFLTKGDKCKVSIRFRGRAITHKEIGQRVLEKYADECKDIATVEQKPKMDGRQMFIMLAPTAEK</sequence>
<evidence type="ECO:0000255" key="1">
    <source>
        <dbReference type="HAMAP-Rule" id="MF_00080"/>
    </source>
</evidence>
<evidence type="ECO:0000305" key="2"/>
<protein>
    <recommendedName>
        <fullName evidence="1">Translation initiation factor IF-3</fullName>
    </recommendedName>
</protein>
<gene>
    <name evidence="1" type="primary">infC</name>
    <name type="ordered locus">SA1504</name>
</gene>
<keyword id="KW-0963">Cytoplasm</keyword>
<keyword id="KW-0396">Initiation factor</keyword>
<keyword id="KW-0648">Protein biosynthesis</keyword>
<organism>
    <name type="scientific">Staphylococcus aureus (strain N315)</name>
    <dbReference type="NCBI Taxonomy" id="158879"/>
    <lineage>
        <taxon>Bacteria</taxon>
        <taxon>Bacillati</taxon>
        <taxon>Bacillota</taxon>
        <taxon>Bacilli</taxon>
        <taxon>Bacillales</taxon>
        <taxon>Staphylococcaceae</taxon>
        <taxon>Staphylococcus</taxon>
    </lineage>
</organism>
<proteinExistence type="evidence at protein level"/>
<name>IF3_STAAN</name>
<dbReference type="EMBL" id="BA000018">
    <property type="protein sequence ID" value="BAB42771.1"/>
    <property type="status" value="ALT_INIT"/>
    <property type="molecule type" value="Genomic_DNA"/>
</dbReference>
<dbReference type="PIR" id="F89951">
    <property type="entry name" value="F89951"/>
</dbReference>
<dbReference type="RefSeq" id="WP_001791162.1">
    <property type="nucleotide sequence ID" value="NC_002745.2"/>
</dbReference>
<dbReference type="SMR" id="P65140"/>
<dbReference type="EnsemblBacteria" id="BAB42771">
    <property type="protein sequence ID" value="BAB42771"/>
    <property type="gene ID" value="BAB42771"/>
</dbReference>
<dbReference type="GeneID" id="66839860"/>
<dbReference type="KEGG" id="sau:SA1504"/>
<dbReference type="HOGENOM" id="CLU_054919_3_2_9"/>
<dbReference type="GO" id="GO:0005829">
    <property type="term" value="C:cytosol"/>
    <property type="evidence" value="ECO:0007669"/>
    <property type="project" value="TreeGrafter"/>
</dbReference>
<dbReference type="GO" id="GO:0016020">
    <property type="term" value="C:membrane"/>
    <property type="evidence" value="ECO:0007669"/>
    <property type="project" value="TreeGrafter"/>
</dbReference>
<dbReference type="GO" id="GO:0043022">
    <property type="term" value="F:ribosome binding"/>
    <property type="evidence" value="ECO:0007669"/>
    <property type="project" value="TreeGrafter"/>
</dbReference>
<dbReference type="GO" id="GO:0003743">
    <property type="term" value="F:translation initiation factor activity"/>
    <property type="evidence" value="ECO:0007669"/>
    <property type="project" value="UniProtKB-UniRule"/>
</dbReference>
<dbReference type="GO" id="GO:0032790">
    <property type="term" value="P:ribosome disassembly"/>
    <property type="evidence" value="ECO:0007669"/>
    <property type="project" value="TreeGrafter"/>
</dbReference>
<dbReference type="FunFam" id="3.10.20.80:FF:000001">
    <property type="entry name" value="Translation initiation factor IF-3"/>
    <property type="match status" value="1"/>
</dbReference>
<dbReference type="FunFam" id="3.30.110.10:FF:000001">
    <property type="entry name" value="Translation initiation factor IF-3"/>
    <property type="match status" value="1"/>
</dbReference>
<dbReference type="Gene3D" id="3.30.110.10">
    <property type="entry name" value="Translation initiation factor 3 (IF-3), C-terminal domain"/>
    <property type="match status" value="1"/>
</dbReference>
<dbReference type="Gene3D" id="3.10.20.80">
    <property type="entry name" value="Translation initiation factor 3 (IF-3), N-terminal domain"/>
    <property type="match status" value="1"/>
</dbReference>
<dbReference type="HAMAP" id="MF_00080">
    <property type="entry name" value="IF_3"/>
    <property type="match status" value="1"/>
</dbReference>
<dbReference type="InterPro" id="IPR036788">
    <property type="entry name" value="T_IF-3_C_sf"/>
</dbReference>
<dbReference type="InterPro" id="IPR036787">
    <property type="entry name" value="T_IF-3_N_sf"/>
</dbReference>
<dbReference type="InterPro" id="IPR019813">
    <property type="entry name" value="Translation_initiation_fac3_CS"/>
</dbReference>
<dbReference type="InterPro" id="IPR001288">
    <property type="entry name" value="Translation_initiation_fac_3"/>
</dbReference>
<dbReference type="InterPro" id="IPR019815">
    <property type="entry name" value="Translation_initiation_fac_3_C"/>
</dbReference>
<dbReference type="InterPro" id="IPR019814">
    <property type="entry name" value="Translation_initiation_fac_3_N"/>
</dbReference>
<dbReference type="NCBIfam" id="TIGR00168">
    <property type="entry name" value="infC"/>
    <property type="match status" value="1"/>
</dbReference>
<dbReference type="PANTHER" id="PTHR10938">
    <property type="entry name" value="TRANSLATION INITIATION FACTOR IF-3"/>
    <property type="match status" value="1"/>
</dbReference>
<dbReference type="PANTHER" id="PTHR10938:SF0">
    <property type="entry name" value="TRANSLATION INITIATION FACTOR IF-3, MITOCHONDRIAL"/>
    <property type="match status" value="1"/>
</dbReference>
<dbReference type="Pfam" id="PF00707">
    <property type="entry name" value="IF3_C"/>
    <property type="match status" value="1"/>
</dbReference>
<dbReference type="Pfam" id="PF05198">
    <property type="entry name" value="IF3_N"/>
    <property type="match status" value="1"/>
</dbReference>
<dbReference type="SUPFAM" id="SSF55200">
    <property type="entry name" value="Translation initiation factor IF3, C-terminal domain"/>
    <property type="match status" value="1"/>
</dbReference>
<dbReference type="SUPFAM" id="SSF54364">
    <property type="entry name" value="Translation initiation factor IF3, N-terminal domain"/>
    <property type="match status" value="1"/>
</dbReference>
<dbReference type="PROSITE" id="PS00938">
    <property type="entry name" value="IF3"/>
    <property type="match status" value="1"/>
</dbReference>
<accession>P65140</accession>
<accession>Q8NW70</accession>
<accession>Q99TI1</accession>
<comment type="function">
    <text evidence="1">IF-3 binds to the 30S ribosomal subunit and shifts the equilibrium between 70S ribosomes and their 50S and 30S subunits in favor of the free subunits, thus enhancing the availability of 30S subunits on which protein synthesis initiation begins.</text>
</comment>
<comment type="subunit">
    <text evidence="1">Monomer.</text>
</comment>
<comment type="subcellular location">
    <subcellularLocation>
        <location evidence="1">Cytoplasm</location>
    </subcellularLocation>
</comment>
<comment type="similarity">
    <text evidence="1">Belongs to the IF-3 family.</text>
</comment>
<comment type="sequence caution" evidence="2">
    <conflict type="erroneous initiation">
        <sequence resource="EMBL-CDS" id="BAB42771"/>
    </conflict>
</comment>
<reference key="1">
    <citation type="journal article" date="2001" name="Lancet">
        <title>Whole genome sequencing of meticillin-resistant Staphylococcus aureus.</title>
        <authorList>
            <person name="Kuroda M."/>
            <person name="Ohta T."/>
            <person name="Uchiyama I."/>
            <person name="Baba T."/>
            <person name="Yuzawa H."/>
            <person name="Kobayashi I."/>
            <person name="Cui L."/>
            <person name="Oguchi A."/>
            <person name="Aoki K."/>
            <person name="Nagai Y."/>
            <person name="Lian J.-Q."/>
            <person name="Ito T."/>
            <person name="Kanamori M."/>
            <person name="Matsumaru H."/>
            <person name="Maruyama A."/>
            <person name="Murakami H."/>
            <person name="Hosoyama A."/>
            <person name="Mizutani-Ui Y."/>
            <person name="Takahashi N.K."/>
            <person name="Sawano T."/>
            <person name="Inoue R."/>
            <person name="Kaito C."/>
            <person name="Sekimizu K."/>
            <person name="Hirakawa H."/>
            <person name="Kuhara S."/>
            <person name="Goto S."/>
            <person name="Yabuzaki J."/>
            <person name="Kanehisa M."/>
            <person name="Yamashita A."/>
            <person name="Oshima K."/>
            <person name="Furuya K."/>
            <person name="Yoshino C."/>
            <person name="Shiba T."/>
            <person name="Hattori M."/>
            <person name="Ogasawara N."/>
            <person name="Hayashi H."/>
            <person name="Hiramatsu K."/>
        </authorList>
    </citation>
    <scope>NUCLEOTIDE SEQUENCE [LARGE SCALE GENOMIC DNA]</scope>
    <source>
        <strain>N315</strain>
    </source>
</reference>
<reference key="2">
    <citation type="submission" date="2007-10" db="UniProtKB">
        <title>Shotgun proteomic analysis of total and membrane protein extracts of S. aureus strain N315.</title>
        <authorList>
            <person name="Vaezzadeh A.R."/>
            <person name="Deshusses J."/>
            <person name="Lescuyer P."/>
            <person name="Hochstrasser D.F."/>
        </authorList>
    </citation>
    <scope>IDENTIFICATION BY MASS SPECTROMETRY [LARGE SCALE ANALYSIS]</scope>
    <source>
        <strain>N315</strain>
    </source>
</reference>